<accession>Q1BXW6</accession>
<protein>
    <recommendedName>
        <fullName evidence="1">Molybdenum cofactor guanylyltransferase</fullName>
        <shortName evidence="1">MoCo guanylyltransferase</shortName>
        <ecNumber evidence="1">2.7.7.77</ecNumber>
    </recommendedName>
    <alternativeName>
        <fullName evidence="1">GTP:molybdopterin guanylyltransferase</fullName>
    </alternativeName>
    <alternativeName>
        <fullName evidence="1">Mo-MPT guanylyltransferase</fullName>
    </alternativeName>
    <alternativeName>
        <fullName evidence="1">Molybdopterin guanylyltransferase</fullName>
    </alternativeName>
    <alternativeName>
        <fullName evidence="1">Molybdopterin-guanine dinucleotide synthase</fullName>
        <shortName evidence="1">MGD synthase</shortName>
    </alternativeName>
</protein>
<dbReference type="EC" id="2.7.7.77" evidence="1"/>
<dbReference type="EMBL" id="CP000378">
    <property type="protein sequence ID" value="ABF75539.1"/>
    <property type="molecule type" value="Genomic_DNA"/>
</dbReference>
<dbReference type="SMR" id="Q1BXW6"/>
<dbReference type="HOGENOM" id="CLU_055597_5_1_4"/>
<dbReference type="GO" id="GO:0005737">
    <property type="term" value="C:cytoplasm"/>
    <property type="evidence" value="ECO:0007669"/>
    <property type="project" value="UniProtKB-SubCell"/>
</dbReference>
<dbReference type="GO" id="GO:0005525">
    <property type="term" value="F:GTP binding"/>
    <property type="evidence" value="ECO:0007669"/>
    <property type="project" value="UniProtKB-UniRule"/>
</dbReference>
<dbReference type="GO" id="GO:0046872">
    <property type="term" value="F:metal ion binding"/>
    <property type="evidence" value="ECO:0007669"/>
    <property type="project" value="UniProtKB-KW"/>
</dbReference>
<dbReference type="GO" id="GO:0061603">
    <property type="term" value="F:molybdenum cofactor guanylyltransferase activity"/>
    <property type="evidence" value="ECO:0007669"/>
    <property type="project" value="UniProtKB-EC"/>
</dbReference>
<dbReference type="GO" id="GO:1902758">
    <property type="term" value="P:bis(molybdopterin guanine dinucleotide)molybdenum biosynthetic process"/>
    <property type="evidence" value="ECO:0007669"/>
    <property type="project" value="TreeGrafter"/>
</dbReference>
<dbReference type="CDD" id="cd02503">
    <property type="entry name" value="MobA"/>
    <property type="match status" value="1"/>
</dbReference>
<dbReference type="Gene3D" id="3.90.550.10">
    <property type="entry name" value="Spore Coat Polysaccharide Biosynthesis Protein SpsA, Chain A"/>
    <property type="match status" value="1"/>
</dbReference>
<dbReference type="HAMAP" id="MF_00316">
    <property type="entry name" value="MobA"/>
    <property type="match status" value="1"/>
</dbReference>
<dbReference type="InterPro" id="IPR025877">
    <property type="entry name" value="MobA-like_NTP_Trfase"/>
</dbReference>
<dbReference type="InterPro" id="IPR013482">
    <property type="entry name" value="Molybde_CF_guanTrfase"/>
</dbReference>
<dbReference type="InterPro" id="IPR029044">
    <property type="entry name" value="Nucleotide-diphossugar_trans"/>
</dbReference>
<dbReference type="NCBIfam" id="TIGR02665">
    <property type="entry name" value="molyb_mobA"/>
    <property type="match status" value="1"/>
</dbReference>
<dbReference type="PANTHER" id="PTHR19136">
    <property type="entry name" value="MOLYBDENUM COFACTOR GUANYLYLTRANSFERASE"/>
    <property type="match status" value="1"/>
</dbReference>
<dbReference type="PANTHER" id="PTHR19136:SF81">
    <property type="entry name" value="MOLYBDENUM COFACTOR GUANYLYLTRANSFERASE"/>
    <property type="match status" value="1"/>
</dbReference>
<dbReference type="Pfam" id="PF12804">
    <property type="entry name" value="NTP_transf_3"/>
    <property type="match status" value="1"/>
</dbReference>
<dbReference type="SUPFAM" id="SSF53448">
    <property type="entry name" value="Nucleotide-diphospho-sugar transferases"/>
    <property type="match status" value="1"/>
</dbReference>
<organism>
    <name type="scientific">Burkholderia orbicola (strain AU 1054)</name>
    <dbReference type="NCBI Taxonomy" id="331271"/>
    <lineage>
        <taxon>Bacteria</taxon>
        <taxon>Pseudomonadati</taxon>
        <taxon>Pseudomonadota</taxon>
        <taxon>Betaproteobacteria</taxon>
        <taxon>Burkholderiales</taxon>
        <taxon>Burkholderiaceae</taxon>
        <taxon>Burkholderia</taxon>
        <taxon>Burkholderia cepacia complex</taxon>
        <taxon>Burkholderia orbicola</taxon>
    </lineage>
</organism>
<proteinExistence type="inferred from homology"/>
<reference key="1">
    <citation type="submission" date="2006-05" db="EMBL/GenBank/DDBJ databases">
        <title>Complete sequence of chromosome 1 of Burkholderia cenocepacia AU 1054.</title>
        <authorList>
            <consortium name="US DOE Joint Genome Institute"/>
            <person name="Copeland A."/>
            <person name="Lucas S."/>
            <person name="Lapidus A."/>
            <person name="Barry K."/>
            <person name="Detter J.C."/>
            <person name="Glavina del Rio T."/>
            <person name="Hammon N."/>
            <person name="Israni S."/>
            <person name="Dalin E."/>
            <person name="Tice H."/>
            <person name="Pitluck S."/>
            <person name="Chain P."/>
            <person name="Malfatti S."/>
            <person name="Shin M."/>
            <person name="Vergez L."/>
            <person name="Schmutz J."/>
            <person name="Larimer F."/>
            <person name="Land M."/>
            <person name="Hauser L."/>
            <person name="Kyrpides N."/>
            <person name="Lykidis A."/>
            <person name="LiPuma J.J."/>
            <person name="Konstantinidis K."/>
            <person name="Tiedje J.M."/>
            <person name="Richardson P."/>
        </authorList>
    </citation>
    <scope>NUCLEOTIDE SEQUENCE [LARGE SCALE GENOMIC DNA]</scope>
    <source>
        <strain>AU 1054</strain>
    </source>
</reference>
<gene>
    <name evidence="1" type="primary">mobA</name>
    <name type="ordered locus">Bcen_0629</name>
</gene>
<comment type="function">
    <text evidence="1">Transfers a GMP moiety from GTP to Mo-molybdopterin (Mo-MPT) cofactor (Moco or molybdenum cofactor) to form Mo-molybdopterin guanine dinucleotide (Mo-MGD) cofactor.</text>
</comment>
<comment type="catalytic activity">
    <reaction evidence="1">
        <text>Mo-molybdopterin + GTP + H(+) = Mo-molybdopterin guanine dinucleotide + diphosphate</text>
        <dbReference type="Rhea" id="RHEA:34243"/>
        <dbReference type="ChEBI" id="CHEBI:15378"/>
        <dbReference type="ChEBI" id="CHEBI:33019"/>
        <dbReference type="ChEBI" id="CHEBI:37565"/>
        <dbReference type="ChEBI" id="CHEBI:71302"/>
        <dbReference type="ChEBI" id="CHEBI:71310"/>
        <dbReference type="EC" id="2.7.7.77"/>
    </reaction>
</comment>
<comment type="cofactor">
    <cofactor evidence="1">
        <name>Mg(2+)</name>
        <dbReference type="ChEBI" id="CHEBI:18420"/>
    </cofactor>
</comment>
<comment type="subunit">
    <text evidence="1">Monomer.</text>
</comment>
<comment type="subcellular location">
    <subcellularLocation>
        <location evidence="1">Cytoplasm</location>
    </subcellularLocation>
</comment>
<comment type="domain">
    <text evidence="1">The N-terminal domain determines nucleotide recognition and specific binding, while the C-terminal domain determines the specific binding to the target protein.</text>
</comment>
<comment type="similarity">
    <text evidence="1">Belongs to the MobA family.</text>
</comment>
<name>MOBA_BURO1</name>
<feature type="chain" id="PRO_1000019108" description="Molybdenum cofactor guanylyltransferase">
    <location>
        <begin position="1"/>
        <end position="205"/>
    </location>
</feature>
<feature type="binding site" evidence="1">
    <location>
        <begin position="14"/>
        <end position="16"/>
    </location>
    <ligand>
        <name>GTP</name>
        <dbReference type="ChEBI" id="CHEBI:37565"/>
    </ligand>
</feature>
<feature type="binding site" evidence="1">
    <location>
        <position position="27"/>
    </location>
    <ligand>
        <name>GTP</name>
        <dbReference type="ChEBI" id="CHEBI:37565"/>
    </ligand>
</feature>
<feature type="binding site" evidence="1">
    <location>
        <position position="77"/>
    </location>
    <ligand>
        <name>GTP</name>
        <dbReference type="ChEBI" id="CHEBI:37565"/>
    </ligand>
</feature>
<feature type="binding site" evidence="1">
    <location>
        <position position="107"/>
    </location>
    <ligand>
        <name>GTP</name>
        <dbReference type="ChEBI" id="CHEBI:37565"/>
    </ligand>
</feature>
<feature type="binding site" evidence="1">
    <location>
        <position position="107"/>
    </location>
    <ligand>
        <name>Mg(2+)</name>
        <dbReference type="ChEBI" id="CHEBI:18420"/>
    </ligand>
</feature>
<sequence>MPAPAFPSIAGLLLAGGRATRMDGVDKGLQLLDGTPLALHVLRRLTPQVDETLISANRHADRYAELSAPFDARIIADETPDFPGPLAGLLAGMRAARAPLVACSPCDTPYLPVDLVARLRAALDAQQADIAMAVTVDAQQVRSPQPTFALLRTSLADDLAARLAAGDRKVRAWYARHKTVEVEFRDERAFYNANSWQELAALARR</sequence>
<keyword id="KW-0963">Cytoplasm</keyword>
<keyword id="KW-0342">GTP-binding</keyword>
<keyword id="KW-0460">Magnesium</keyword>
<keyword id="KW-0479">Metal-binding</keyword>
<keyword id="KW-0501">Molybdenum cofactor biosynthesis</keyword>
<keyword id="KW-0547">Nucleotide-binding</keyword>
<keyword id="KW-0808">Transferase</keyword>
<evidence type="ECO:0000255" key="1">
    <source>
        <dbReference type="HAMAP-Rule" id="MF_00316"/>
    </source>
</evidence>